<keyword id="KW-0325">Glycoprotein</keyword>
<keyword id="KW-0349">Heme</keyword>
<keyword id="KW-0408">Iron</keyword>
<keyword id="KW-0472">Membrane</keyword>
<keyword id="KW-0479">Metal-binding</keyword>
<keyword id="KW-0503">Monooxygenase</keyword>
<keyword id="KW-0560">Oxidoreductase</keyword>
<keyword id="KW-1185">Reference proteome</keyword>
<keyword id="KW-0812">Transmembrane</keyword>
<keyword id="KW-1133">Transmembrane helix</keyword>
<reference key="1">
    <citation type="journal article" date="2013" name="New Phytol.">
        <title>Comparative genomic and transcriptomic analyses reveal the hemibiotrophic stage shift of Colletotrichum fungi.</title>
        <authorList>
            <person name="Gan P."/>
            <person name="Ikeda K."/>
            <person name="Irieda H."/>
            <person name="Narusaka M."/>
            <person name="O'Connell R.J."/>
            <person name="Narusaka Y."/>
            <person name="Takano Y."/>
            <person name="Kubo Y."/>
            <person name="Shirasu K."/>
        </authorList>
    </citation>
    <scope>NUCLEOTIDE SEQUENCE [LARGE SCALE GENOMIC DNA]</scope>
    <source>
        <strain>104-T / ATCC 96160 / CBS 514.97 / LARS 414 / MAFF 240422</strain>
    </source>
</reference>
<reference key="2">
    <citation type="journal article" date="2019" name="Mol. Plant Microbe Interact.">
        <title>Genome sequence resources for four phytopathogenic fungi from the Colletotrichum orbiculare species complex.</title>
        <authorList>
            <person name="Gan P."/>
            <person name="Tsushima A."/>
            <person name="Narusaka M."/>
            <person name="Narusaka Y."/>
            <person name="Takano Y."/>
            <person name="Kubo Y."/>
            <person name="Shirasu K."/>
        </authorList>
    </citation>
    <scope>GENOME REANNOTATION</scope>
    <source>
        <strain>104-T / ATCC 96160 / CBS 514.97 / LARS 414 / MAFF 240422</strain>
    </source>
</reference>
<reference key="3">
    <citation type="journal article" date="2018" name="Tetrahedron Lett.">
        <title>Identification of novel sesterterpenes by genome mining of phytopathogenic fungi Phoma and Colletotrichum sp.</title>
        <authorList>
            <person name="Gao L."/>
            <person name="Narita K."/>
            <person name="Ozaki T."/>
            <person name="Kamukara N."/>
            <person name="Gan P."/>
            <person name="Minami A."/>
            <person name="Liu C."/>
            <person name="Lei X."/>
            <person name="Shirasu K."/>
            <person name="Oikawa H."/>
        </authorList>
    </citation>
    <scope>FUNCTION</scope>
    <scope>CATALYTIC ACTIVITY</scope>
    <scope>PATHWAY</scope>
</reference>
<name>BTCB_COLOR</name>
<evidence type="ECO:0000250" key="1">
    <source>
        <dbReference type="UniProtKB" id="P04798"/>
    </source>
</evidence>
<evidence type="ECO:0000255" key="2"/>
<evidence type="ECO:0000255" key="3">
    <source>
        <dbReference type="PROSITE-ProRule" id="PRU00498"/>
    </source>
</evidence>
<evidence type="ECO:0000269" key="4">
    <source ref="3"/>
</evidence>
<evidence type="ECO:0000303" key="5">
    <source ref="3"/>
</evidence>
<evidence type="ECO:0000305" key="6"/>
<accession>A0A484FXR4</accession>
<accession>N4VA96</accession>
<proteinExistence type="evidence at protein level"/>
<gene>
    <name evidence="5" type="primary">btcB</name>
    <name type="ORF">Cob_11438</name>
    <name type="ORF">Cob_v004821</name>
</gene>
<dbReference type="EC" id="1.-.-.-" evidence="4"/>
<dbReference type="EMBL" id="KB726025">
    <property type="protein sequence ID" value="ENH79270.1"/>
    <property type="status" value="ALT_SEQ"/>
    <property type="molecule type" value="Genomic_DNA"/>
</dbReference>
<dbReference type="EMBL" id="AMCV02000011">
    <property type="protein sequence ID" value="TDZ21877.1"/>
    <property type="status" value="ALT_SEQ"/>
    <property type="molecule type" value="Genomic_DNA"/>
</dbReference>
<dbReference type="SMR" id="A0A484FXR4"/>
<dbReference type="STRING" id="1213857.A0A484FXR4"/>
<dbReference type="GlyCosmos" id="A0A484FXR4">
    <property type="glycosylation" value="4 sites, No reported glycans"/>
</dbReference>
<dbReference type="EnsemblFungi" id="ENH79270">
    <property type="protein sequence ID" value="ENH79270"/>
    <property type="gene ID" value="Cob_11438"/>
</dbReference>
<dbReference type="eggNOG" id="KOG0158">
    <property type="taxonomic scope" value="Eukaryota"/>
</dbReference>
<dbReference type="HOGENOM" id="CLU_334631_0_0_1"/>
<dbReference type="OrthoDB" id="1470350at2759"/>
<dbReference type="UniPathway" id="UPA00213"/>
<dbReference type="Proteomes" id="UP000014480">
    <property type="component" value="Unassembled WGS sequence"/>
</dbReference>
<dbReference type="GO" id="GO:0016020">
    <property type="term" value="C:membrane"/>
    <property type="evidence" value="ECO:0007669"/>
    <property type="project" value="UniProtKB-SubCell"/>
</dbReference>
<dbReference type="GO" id="GO:0020037">
    <property type="term" value="F:heme binding"/>
    <property type="evidence" value="ECO:0007669"/>
    <property type="project" value="InterPro"/>
</dbReference>
<dbReference type="GO" id="GO:0005506">
    <property type="term" value="F:iron ion binding"/>
    <property type="evidence" value="ECO:0007669"/>
    <property type="project" value="InterPro"/>
</dbReference>
<dbReference type="GO" id="GO:0004497">
    <property type="term" value="F:monooxygenase activity"/>
    <property type="evidence" value="ECO:0007669"/>
    <property type="project" value="UniProtKB-KW"/>
</dbReference>
<dbReference type="GO" id="GO:0016705">
    <property type="term" value="F:oxidoreductase activity, acting on paired donors, with incorporation or reduction of molecular oxygen"/>
    <property type="evidence" value="ECO:0007669"/>
    <property type="project" value="InterPro"/>
</dbReference>
<dbReference type="GO" id="GO:0016114">
    <property type="term" value="P:terpenoid biosynthetic process"/>
    <property type="evidence" value="ECO:0007669"/>
    <property type="project" value="UniProtKB-UniPathway"/>
</dbReference>
<dbReference type="Gene3D" id="1.10.630.10">
    <property type="entry name" value="Cytochrome P450"/>
    <property type="match status" value="1"/>
</dbReference>
<dbReference type="InterPro" id="IPR001128">
    <property type="entry name" value="Cyt_P450"/>
</dbReference>
<dbReference type="InterPro" id="IPR002401">
    <property type="entry name" value="Cyt_P450_E_grp-I"/>
</dbReference>
<dbReference type="InterPro" id="IPR036396">
    <property type="entry name" value="Cyt_P450_sf"/>
</dbReference>
<dbReference type="InterPro" id="IPR050121">
    <property type="entry name" value="Cytochrome_P450_monoxygenase"/>
</dbReference>
<dbReference type="PANTHER" id="PTHR24305">
    <property type="entry name" value="CYTOCHROME P450"/>
    <property type="match status" value="1"/>
</dbReference>
<dbReference type="PANTHER" id="PTHR24305:SF162">
    <property type="entry name" value="P450, PUTATIVE (EUROFUNG)-RELATED"/>
    <property type="match status" value="1"/>
</dbReference>
<dbReference type="Pfam" id="PF00067">
    <property type="entry name" value="p450"/>
    <property type="match status" value="1"/>
</dbReference>
<dbReference type="PRINTS" id="PR00463">
    <property type="entry name" value="EP450I"/>
</dbReference>
<dbReference type="PRINTS" id="PR00385">
    <property type="entry name" value="P450"/>
</dbReference>
<dbReference type="SUPFAM" id="SSF48264">
    <property type="entry name" value="Cytochrome P450"/>
    <property type="match status" value="1"/>
</dbReference>
<protein>
    <recommendedName>
        <fullName evidence="5">Cytochrome P450 monooxygenase btcB</fullName>
        <ecNumber evidence="4">1.-.-.-</ecNumber>
    </recommendedName>
    <alternativeName>
        <fullName evidence="5">Betaestacins biosynthesis cluster protein B</fullName>
    </alternativeName>
</protein>
<organism>
    <name type="scientific">Colletotrichum orbiculare (strain 104-T / ATCC 96160 / CBS 514.97 / LARS 414 / MAFF 240422)</name>
    <name type="common">Cucumber anthracnose fungus</name>
    <name type="synonym">Colletotrichum lagenarium</name>
    <dbReference type="NCBI Taxonomy" id="1213857"/>
    <lineage>
        <taxon>Eukaryota</taxon>
        <taxon>Fungi</taxon>
        <taxon>Dikarya</taxon>
        <taxon>Ascomycota</taxon>
        <taxon>Pezizomycotina</taxon>
        <taxon>Sordariomycetes</taxon>
        <taxon>Hypocreomycetidae</taxon>
        <taxon>Glomerellales</taxon>
        <taxon>Glomerellaceae</taxon>
        <taxon>Colletotrichum</taxon>
        <taxon>Colletotrichum orbiculare species complex</taxon>
    </lineage>
</organism>
<feature type="chain" id="PRO_0000453711" description="Cytochrome P450 monooxygenase btcB">
    <location>
        <begin position="1"/>
        <end position="534"/>
    </location>
</feature>
<feature type="transmembrane region" description="Helical" evidence="2">
    <location>
        <begin position="41"/>
        <end position="61"/>
    </location>
</feature>
<feature type="binding site" description="axial binding residue" evidence="1">
    <location>
        <position position="484"/>
    </location>
    <ligand>
        <name>heme</name>
        <dbReference type="ChEBI" id="CHEBI:30413"/>
    </ligand>
    <ligandPart>
        <name>Fe</name>
        <dbReference type="ChEBI" id="CHEBI:18248"/>
    </ligandPart>
</feature>
<feature type="glycosylation site" description="N-linked (GlcNAc...) asparagine" evidence="3">
    <location>
        <position position="20"/>
    </location>
</feature>
<feature type="glycosylation site" description="N-linked (GlcNAc...) asparagine" evidence="3">
    <location>
        <position position="335"/>
    </location>
</feature>
<feature type="glycosylation site" description="N-linked (GlcNAc...) asparagine" evidence="3">
    <location>
        <position position="413"/>
    </location>
</feature>
<feature type="glycosylation site" description="N-linked (GlcNAc...) asparagine" evidence="3">
    <location>
        <position position="431"/>
    </location>
</feature>
<sequence length="534" mass="59697">MASSSIASFAPFESYSPPLNTSETSLISVQLTQDGLDYHGALAFLCGALLFGFVYSVFYNLYLSPIARVPGPLIAQVSPLWLMRAVCRKQLNCDIKKLHEKYGKKPERSPVVRLSPTEVSFATVEAQNAIHRPGASAKQGLFFTKEGTLEAMMGEIIWPATNLLTATVPEEHQRLKKALQPAFTEKALQLQEPIQQQHTDRLIRSVQEASRQNRVVDLTPHMSQAIWDIISDLSFGEPLLKDQLAKFERLKTTFCMVSPLLEALQVLLAVPGAQTLAKACVGLVPLLFWLPTNVLPSAQLRKRFERQDSNEDFLTAIMRCREMGIQMTDMELQSNASLLVMVGYDTTATSLSATMNLLLRHPLCLQALQDELHSHFSSTSDMTSKPLSQLPILNGCIQESLRLFPPANGKGTNRTSPGTMIDGVYIPRGVNVSADMYTIQRSPTYWSRPNEFCPDRWFDNGPGTEFAQDVRSSHNPFLLGPRMCIGRAVALQSMRMLIAKLVYTFDLEAVEDYSWDLHVANSYLWTGYRCNARV</sequence>
<comment type="function">
    <text evidence="4">Cytochrome P4590 monooxygenase part of the gene cluster that mediates the biosynthesis of betaestacins (Ref.3). The bifunctional terpene synthase btcA converts isopentenyl diphosphate (IPP) and dimethylallyl diphosphate (DMAPP) into the sesterterpene betaestacin I (Ref.3). The C-terminal prenyltransferase (PT) domain of btcA catalyzes formation of GFPP, whereas the N-terminal terpene cyclase (TC) domain catalyzes the cyclization of GFPP into betaestacin I (Ref.3). The cytochrome P450 monooxygenase btcB oxidizes the C25 methyl group of betaestacin I to yield the carboxylic acid betaestacin IV via the alcohol betaestacin III (Ref.3). The cytochrome P450 monooxygenase btcC further catalyzes the multistep oxidation of betaestacin IV to produce several compounds, including betaestacins Va, Vb, Vc and VI (Ref.3).</text>
</comment>
<comment type="cofactor">
    <cofactor evidence="1">
        <name>heme</name>
        <dbReference type="ChEBI" id="CHEBI:30413"/>
    </cofactor>
</comment>
<comment type="pathway">
    <text evidence="4">Secondary metabolite biosynthesis; terpenoid biosynthesis.</text>
</comment>
<comment type="subcellular location">
    <subcellularLocation>
        <location evidence="2">Membrane</location>
        <topology evidence="2">Single-pass membrane protein</topology>
    </subcellularLocation>
</comment>
<comment type="similarity">
    <text evidence="6">Belongs to the cytochrome P450 family.</text>
</comment>
<comment type="sequence caution" evidence="6">
    <conflict type="erroneous gene model prediction">
        <sequence resource="EMBL-CDS" id="ENH79270"/>
    </conflict>
</comment>
<comment type="sequence caution" evidence="6">
    <conflict type="erroneous gene model prediction">
        <sequence resource="EMBL-CDS" id="TDZ21877"/>
    </conflict>
</comment>